<dbReference type="EC" id="6.2.1.5" evidence="1"/>
<dbReference type="EMBL" id="CP000249">
    <property type="protein sequence ID" value="ABD10035.1"/>
    <property type="molecule type" value="Genomic_DNA"/>
</dbReference>
<dbReference type="RefSeq" id="WP_011435104.1">
    <property type="nucleotide sequence ID" value="NZ_JENI01000019.1"/>
</dbReference>
<dbReference type="SMR" id="Q2JFA7"/>
<dbReference type="STRING" id="106370.Francci3_0651"/>
<dbReference type="KEGG" id="fra:Francci3_0651"/>
<dbReference type="eggNOG" id="COG0045">
    <property type="taxonomic scope" value="Bacteria"/>
</dbReference>
<dbReference type="HOGENOM" id="CLU_037430_0_2_11"/>
<dbReference type="OrthoDB" id="9802602at2"/>
<dbReference type="PhylomeDB" id="Q2JFA7"/>
<dbReference type="UniPathway" id="UPA00223">
    <property type="reaction ID" value="UER00999"/>
</dbReference>
<dbReference type="Proteomes" id="UP000001937">
    <property type="component" value="Chromosome"/>
</dbReference>
<dbReference type="GO" id="GO:0005829">
    <property type="term" value="C:cytosol"/>
    <property type="evidence" value="ECO:0007669"/>
    <property type="project" value="TreeGrafter"/>
</dbReference>
<dbReference type="GO" id="GO:0042709">
    <property type="term" value="C:succinate-CoA ligase complex"/>
    <property type="evidence" value="ECO:0007669"/>
    <property type="project" value="TreeGrafter"/>
</dbReference>
<dbReference type="GO" id="GO:0005524">
    <property type="term" value="F:ATP binding"/>
    <property type="evidence" value="ECO:0007669"/>
    <property type="project" value="UniProtKB-UniRule"/>
</dbReference>
<dbReference type="GO" id="GO:0000287">
    <property type="term" value="F:magnesium ion binding"/>
    <property type="evidence" value="ECO:0007669"/>
    <property type="project" value="UniProtKB-UniRule"/>
</dbReference>
<dbReference type="GO" id="GO:0004775">
    <property type="term" value="F:succinate-CoA ligase (ADP-forming) activity"/>
    <property type="evidence" value="ECO:0007669"/>
    <property type="project" value="UniProtKB-UniRule"/>
</dbReference>
<dbReference type="GO" id="GO:0004776">
    <property type="term" value="F:succinate-CoA ligase (GDP-forming) activity"/>
    <property type="evidence" value="ECO:0007669"/>
    <property type="project" value="RHEA"/>
</dbReference>
<dbReference type="GO" id="GO:0006104">
    <property type="term" value="P:succinyl-CoA metabolic process"/>
    <property type="evidence" value="ECO:0007669"/>
    <property type="project" value="TreeGrafter"/>
</dbReference>
<dbReference type="GO" id="GO:0006099">
    <property type="term" value="P:tricarboxylic acid cycle"/>
    <property type="evidence" value="ECO:0007669"/>
    <property type="project" value="UniProtKB-UniRule"/>
</dbReference>
<dbReference type="FunFam" id="3.30.1490.20:FF:000014">
    <property type="entry name" value="Succinate--CoA ligase [ADP-forming] subunit beta"/>
    <property type="match status" value="1"/>
</dbReference>
<dbReference type="FunFam" id="3.30.470.20:FF:000002">
    <property type="entry name" value="Succinate--CoA ligase [ADP-forming] subunit beta"/>
    <property type="match status" value="1"/>
</dbReference>
<dbReference type="FunFam" id="3.40.50.261:FF:000007">
    <property type="entry name" value="Succinate--CoA ligase [ADP-forming] subunit beta"/>
    <property type="match status" value="1"/>
</dbReference>
<dbReference type="Gene3D" id="3.30.1490.20">
    <property type="entry name" value="ATP-grasp fold, A domain"/>
    <property type="match status" value="1"/>
</dbReference>
<dbReference type="Gene3D" id="3.30.470.20">
    <property type="entry name" value="ATP-grasp fold, B domain"/>
    <property type="match status" value="1"/>
</dbReference>
<dbReference type="Gene3D" id="3.40.50.261">
    <property type="entry name" value="Succinyl-CoA synthetase domains"/>
    <property type="match status" value="1"/>
</dbReference>
<dbReference type="HAMAP" id="MF_00558">
    <property type="entry name" value="Succ_CoA_beta"/>
    <property type="match status" value="1"/>
</dbReference>
<dbReference type="InterPro" id="IPR011761">
    <property type="entry name" value="ATP-grasp"/>
</dbReference>
<dbReference type="InterPro" id="IPR013650">
    <property type="entry name" value="ATP-grasp_succ-CoA_synth-type"/>
</dbReference>
<dbReference type="InterPro" id="IPR013815">
    <property type="entry name" value="ATP_grasp_subdomain_1"/>
</dbReference>
<dbReference type="InterPro" id="IPR017866">
    <property type="entry name" value="Succ-CoA_synthase_bsu_CS"/>
</dbReference>
<dbReference type="InterPro" id="IPR005811">
    <property type="entry name" value="SUCC_ACL_C"/>
</dbReference>
<dbReference type="InterPro" id="IPR005809">
    <property type="entry name" value="Succ_CoA_ligase-like_bsu"/>
</dbReference>
<dbReference type="InterPro" id="IPR016102">
    <property type="entry name" value="Succinyl-CoA_synth-like"/>
</dbReference>
<dbReference type="NCBIfam" id="NF001913">
    <property type="entry name" value="PRK00696.1"/>
    <property type="match status" value="1"/>
</dbReference>
<dbReference type="NCBIfam" id="TIGR01016">
    <property type="entry name" value="sucCoAbeta"/>
    <property type="match status" value="1"/>
</dbReference>
<dbReference type="PANTHER" id="PTHR11815:SF10">
    <property type="entry name" value="SUCCINATE--COA LIGASE [GDP-FORMING] SUBUNIT BETA, MITOCHONDRIAL"/>
    <property type="match status" value="1"/>
</dbReference>
<dbReference type="PANTHER" id="PTHR11815">
    <property type="entry name" value="SUCCINYL-COA SYNTHETASE BETA CHAIN"/>
    <property type="match status" value="1"/>
</dbReference>
<dbReference type="Pfam" id="PF08442">
    <property type="entry name" value="ATP-grasp_2"/>
    <property type="match status" value="1"/>
</dbReference>
<dbReference type="Pfam" id="PF00549">
    <property type="entry name" value="Ligase_CoA"/>
    <property type="match status" value="1"/>
</dbReference>
<dbReference type="PIRSF" id="PIRSF001554">
    <property type="entry name" value="SucCS_beta"/>
    <property type="match status" value="1"/>
</dbReference>
<dbReference type="SUPFAM" id="SSF56059">
    <property type="entry name" value="Glutathione synthetase ATP-binding domain-like"/>
    <property type="match status" value="1"/>
</dbReference>
<dbReference type="SUPFAM" id="SSF52210">
    <property type="entry name" value="Succinyl-CoA synthetase domains"/>
    <property type="match status" value="1"/>
</dbReference>
<dbReference type="PROSITE" id="PS50975">
    <property type="entry name" value="ATP_GRASP"/>
    <property type="match status" value="1"/>
</dbReference>
<dbReference type="PROSITE" id="PS01217">
    <property type="entry name" value="SUCCINYL_COA_LIG_3"/>
    <property type="match status" value="1"/>
</dbReference>
<protein>
    <recommendedName>
        <fullName evidence="1">Succinate--CoA ligase [ADP-forming] subunit beta</fullName>
        <ecNumber evidence="1">6.2.1.5</ecNumber>
    </recommendedName>
    <alternativeName>
        <fullName evidence="1">Succinyl-CoA synthetase subunit beta</fullName>
        <shortName evidence="1">SCS-beta</shortName>
    </alternativeName>
</protein>
<sequence>MDLFEYQAKKLFAEHGVPVPTGKTATTPEEARAIATELGGRVVVKAQVKTGGRGKAGGVKVADGPDDAFAKATAILGMDIKGHTVHSVLVEEASNIAEEYYASFLLDRANRTFLAMASREGGMEIEEVAATKPEALARIAIDPLKGVDAAKAREIAVAAKLPEAALDGASELLAKLWTVFVKSDATLVEVNPLILTGDGRVVALDGKVSLDDNADFRHPEHEAFVDVAAVDPLEQKAKEKGLNYVKLEGEVGIIGNGAGLVMSTLDVVTYAGEEFGGKRPANFLDIGGGASAEVMANGLSIILGDPAVKSVFVNIFGGITSCDAVANGIVQALKIVGDVSTPLVVRLDGNNAEEGRRILAEANLPVVKPVDTMDGAAKLAAELAAAAA</sequence>
<keyword id="KW-0067">ATP-binding</keyword>
<keyword id="KW-0436">Ligase</keyword>
<keyword id="KW-0460">Magnesium</keyword>
<keyword id="KW-0479">Metal-binding</keyword>
<keyword id="KW-0547">Nucleotide-binding</keyword>
<keyword id="KW-1185">Reference proteome</keyword>
<keyword id="KW-0816">Tricarboxylic acid cycle</keyword>
<name>SUCC_FRACC</name>
<gene>
    <name evidence="1" type="primary">sucC</name>
    <name type="ordered locus">Francci3_0651</name>
</gene>
<proteinExistence type="inferred from homology"/>
<feature type="chain" id="PRO_1000082087" description="Succinate--CoA ligase [ADP-forming] subunit beta">
    <location>
        <begin position="1"/>
        <end position="388"/>
    </location>
</feature>
<feature type="domain" description="ATP-grasp" evidence="1">
    <location>
        <begin position="9"/>
        <end position="236"/>
    </location>
</feature>
<feature type="binding site" evidence="1">
    <location>
        <position position="45"/>
    </location>
    <ligand>
        <name>ATP</name>
        <dbReference type="ChEBI" id="CHEBI:30616"/>
    </ligand>
</feature>
<feature type="binding site" evidence="1">
    <location>
        <begin position="52"/>
        <end position="54"/>
    </location>
    <ligand>
        <name>ATP</name>
        <dbReference type="ChEBI" id="CHEBI:30616"/>
    </ligand>
</feature>
<feature type="binding site" evidence="1">
    <location>
        <position position="91"/>
    </location>
    <ligand>
        <name>ATP</name>
        <dbReference type="ChEBI" id="CHEBI:30616"/>
    </ligand>
</feature>
<feature type="binding site" evidence="1">
    <location>
        <position position="94"/>
    </location>
    <ligand>
        <name>ATP</name>
        <dbReference type="ChEBI" id="CHEBI:30616"/>
    </ligand>
</feature>
<feature type="binding site" evidence="1">
    <location>
        <position position="99"/>
    </location>
    <ligand>
        <name>ATP</name>
        <dbReference type="ChEBI" id="CHEBI:30616"/>
    </ligand>
</feature>
<feature type="binding site" evidence="1">
    <location>
        <position position="191"/>
    </location>
    <ligand>
        <name>Mg(2+)</name>
        <dbReference type="ChEBI" id="CHEBI:18420"/>
    </ligand>
</feature>
<feature type="binding site" evidence="1">
    <location>
        <position position="205"/>
    </location>
    <ligand>
        <name>Mg(2+)</name>
        <dbReference type="ChEBI" id="CHEBI:18420"/>
    </ligand>
</feature>
<feature type="binding site" evidence="1">
    <location>
        <position position="256"/>
    </location>
    <ligand>
        <name>substrate</name>
        <note>ligand shared with subunit alpha</note>
    </ligand>
</feature>
<feature type="binding site" evidence="1">
    <location>
        <begin position="318"/>
        <end position="320"/>
    </location>
    <ligand>
        <name>substrate</name>
        <note>ligand shared with subunit alpha</note>
    </ligand>
</feature>
<evidence type="ECO:0000255" key="1">
    <source>
        <dbReference type="HAMAP-Rule" id="MF_00558"/>
    </source>
</evidence>
<reference key="1">
    <citation type="journal article" date="2007" name="Genome Res.">
        <title>Genome characteristics of facultatively symbiotic Frankia sp. strains reflect host range and host plant biogeography.</title>
        <authorList>
            <person name="Normand P."/>
            <person name="Lapierre P."/>
            <person name="Tisa L.S."/>
            <person name="Gogarten J.P."/>
            <person name="Alloisio N."/>
            <person name="Bagnarol E."/>
            <person name="Bassi C.A."/>
            <person name="Berry A.M."/>
            <person name="Bickhart D.M."/>
            <person name="Choisne N."/>
            <person name="Couloux A."/>
            <person name="Cournoyer B."/>
            <person name="Cruveiller S."/>
            <person name="Daubin V."/>
            <person name="Demange N."/>
            <person name="Francino M.P."/>
            <person name="Goltsman E."/>
            <person name="Huang Y."/>
            <person name="Kopp O.R."/>
            <person name="Labarre L."/>
            <person name="Lapidus A."/>
            <person name="Lavire C."/>
            <person name="Marechal J."/>
            <person name="Martinez M."/>
            <person name="Mastronunzio J.E."/>
            <person name="Mullin B.C."/>
            <person name="Niemann J."/>
            <person name="Pujic P."/>
            <person name="Rawnsley T."/>
            <person name="Rouy Z."/>
            <person name="Schenowitz C."/>
            <person name="Sellstedt A."/>
            <person name="Tavares F."/>
            <person name="Tomkins J.P."/>
            <person name="Vallenet D."/>
            <person name="Valverde C."/>
            <person name="Wall L.G."/>
            <person name="Wang Y."/>
            <person name="Medigue C."/>
            <person name="Benson D.R."/>
        </authorList>
    </citation>
    <scope>NUCLEOTIDE SEQUENCE [LARGE SCALE GENOMIC DNA]</scope>
    <source>
        <strain>DSM 45818 / CECT 9043 / HFP020203 / CcI3</strain>
    </source>
</reference>
<accession>Q2JFA7</accession>
<organism>
    <name type="scientific">Frankia casuarinae (strain DSM 45818 / CECT 9043 / HFP020203 / CcI3)</name>
    <dbReference type="NCBI Taxonomy" id="106370"/>
    <lineage>
        <taxon>Bacteria</taxon>
        <taxon>Bacillati</taxon>
        <taxon>Actinomycetota</taxon>
        <taxon>Actinomycetes</taxon>
        <taxon>Frankiales</taxon>
        <taxon>Frankiaceae</taxon>
        <taxon>Frankia</taxon>
    </lineage>
</organism>
<comment type="function">
    <text evidence="1">Succinyl-CoA synthetase functions in the citric acid cycle (TCA), coupling the hydrolysis of succinyl-CoA to the synthesis of either ATP or GTP and thus represents the only step of substrate-level phosphorylation in the TCA. The beta subunit provides nucleotide specificity of the enzyme and binds the substrate succinate, while the binding sites for coenzyme A and phosphate are found in the alpha subunit.</text>
</comment>
<comment type="catalytic activity">
    <reaction evidence="1">
        <text>succinate + ATP + CoA = succinyl-CoA + ADP + phosphate</text>
        <dbReference type="Rhea" id="RHEA:17661"/>
        <dbReference type="ChEBI" id="CHEBI:30031"/>
        <dbReference type="ChEBI" id="CHEBI:30616"/>
        <dbReference type="ChEBI" id="CHEBI:43474"/>
        <dbReference type="ChEBI" id="CHEBI:57287"/>
        <dbReference type="ChEBI" id="CHEBI:57292"/>
        <dbReference type="ChEBI" id="CHEBI:456216"/>
        <dbReference type="EC" id="6.2.1.5"/>
    </reaction>
    <physiologicalReaction direction="right-to-left" evidence="1">
        <dbReference type="Rhea" id="RHEA:17663"/>
    </physiologicalReaction>
</comment>
<comment type="catalytic activity">
    <reaction evidence="1">
        <text>GTP + succinate + CoA = succinyl-CoA + GDP + phosphate</text>
        <dbReference type="Rhea" id="RHEA:22120"/>
        <dbReference type="ChEBI" id="CHEBI:30031"/>
        <dbReference type="ChEBI" id="CHEBI:37565"/>
        <dbReference type="ChEBI" id="CHEBI:43474"/>
        <dbReference type="ChEBI" id="CHEBI:57287"/>
        <dbReference type="ChEBI" id="CHEBI:57292"/>
        <dbReference type="ChEBI" id="CHEBI:58189"/>
    </reaction>
    <physiologicalReaction direction="right-to-left" evidence="1">
        <dbReference type="Rhea" id="RHEA:22122"/>
    </physiologicalReaction>
</comment>
<comment type="cofactor">
    <cofactor evidence="1">
        <name>Mg(2+)</name>
        <dbReference type="ChEBI" id="CHEBI:18420"/>
    </cofactor>
    <text evidence="1">Binds 1 Mg(2+) ion per subunit.</text>
</comment>
<comment type="pathway">
    <text evidence="1">Carbohydrate metabolism; tricarboxylic acid cycle; succinate from succinyl-CoA (ligase route): step 1/1.</text>
</comment>
<comment type="subunit">
    <text evidence="1">Heterotetramer of two alpha and two beta subunits.</text>
</comment>
<comment type="similarity">
    <text evidence="1">Belongs to the succinate/malate CoA ligase beta subunit family.</text>
</comment>